<protein>
    <recommendedName>
        <fullName evidence="1">tRNA pseudouridine synthase B</fullName>
        <ecNumber evidence="1">5.4.99.25</ecNumber>
    </recommendedName>
    <alternativeName>
        <fullName evidence="1">tRNA pseudouridine(55) synthase</fullName>
        <shortName evidence="1">Psi55 synthase</shortName>
    </alternativeName>
    <alternativeName>
        <fullName evidence="1">tRNA pseudouridylate synthase</fullName>
    </alternativeName>
    <alternativeName>
        <fullName evidence="1">tRNA-uridine isomerase</fullName>
    </alternativeName>
</protein>
<organism>
    <name type="scientific">Ehrlichia ruminantium (strain Gardel)</name>
    <dbReference type="NCBI Taxonomy" id="302409"/>
    <lineage>
        <taxon>Bacteria</taxon>
        <taxon>Pseudomonadati</taxon>
        <taxon>Pseudomonadota</taxon>
        <taxon>Alphaproteobacteria</taxon>
        <taxon>Rickettsiales</taxon>
        <taxon>Anaplasmataceae</taxon>
        <taxon>Ehrlichia</taxon>
    </lineage>
</organism>
<keyword id="KW-0413">Isomerase</keyword>
<keyword id="KW-0819">tRNA processing</keyword>
<proteinExistence type="inferred from homology"/>
<comment type="function">
    <text evidence="1">Responsible for synthesis of pseudouridine from uracil-55 in the psi GC loop of transfer RNAs.</text>
</comment>
<comment type="catalytic activity">
    <reaction evidence="1">
        <text>uridine(55) in tRNA = pseudouridine(55) in tRNA</text>
        <dbReference type="Rhea" id="RHEA:42532"/>
        <dbReference type="Rhea" id="RHEA-COMP:10101"/>
        <dbReference type="Rhea" id="RHEA-COMP:10102"/>
        <dbReference type="ChEBI" id="CHEBI:65314"/>
        <dbReference type="ChEBI" id="CHEBI:65315"/>
        <dbReference type="EC" id="5.4.99.25"/>
    </reaction>
</comment>
<comment type="similarity">
    <text evidence="1">Belongs to the pseudouridine synthase TruB family. Type 1 subfamily.</text>
</comment>
<reference key="1">
    <citation type="journal article" date="2006" name="J. Bacteriol.">
        <title>Comparative genomic analysis of three strains of Ehrlichia ruminantium reveals an active process of genome size plasticity.</title>
        <authorList>
            <person name="Frutos R."/>
            <person name="Viari A."/>
            <person name="Ferraz C."/>
            <person name="Morgat A."/>
            <person name="Eychenie S."/>
            <person name="Kandassamy Y."/>
            <person name="Chantal I."/>
            <person name="Bensaid A."/>
            <person name="Coissac E."/>
            <person name="Vachiery N."/>
            <person name="Demaille J."/>
            <person name="Martinez D."/>
        </authorList>
    </citation>
    <scope>NUCLEOTIDE SEQUENCE [LARGE SCALE GENOMIC DNA]</scope>
    <source>
        <strain>Gardel</strain>
    </source>
</reference>
<dbReference type="EC" id="5.4.99.25" evidence="1"/>
<dbReference type="EMBL" id="CR925677">
    <property type="protein sequence ID" value="CAI27807.1"/>
    <property type="molecule type" value="Genomic_DNA"/>
</dbReference>
<dbReference type="RefSeq" id="WP_011155033.1">
    <property type="nucleotide sequence ID" value="NC_006831.1"/>
</dbReference>
<dbReference type="SMR" id="Q5FHK7"/>
<dbReference type="GeneID" id="33057981"/>
<dbReference type="KEGG" id="erg:ERGA_CDS_03550"/>
<dbReference type="HOGENOM" id="CLU_032087_0_0_5"/>
<dbReference type="OrthoDB" id="9802309at2"/>
<dbReference type="Proteomes" id="UP000000533">
    <property type="component" value="Chromosome"/>
</dbReference>
<dbReference type="GO" id="GO:0003723">
    <property type="term" value="F:RNA binding"/>
    <property type="evidence" value="ECO:0007669"/>
    <property type="project" value="InterPro"/>
</dbReference>
<dbReference type="GO" id="GO:0160148">
    <property type="term" value="F:tRNA pseudouridine(55) synthase activity"/>
    <property type="evidence" value="ECO:0007669"/>
    <property type="project" value="UniProtKB-EC"/>
</dbReference>
<dbReference type="GO" id="GO:1990481">
    <property type="term" value="P:mRNA pseudouridine synthesis"/>
    <property type="evidence" value="ECO:0007669"/>
    <property type="project" value="TreeGrafter"/>
</dbReference>
<dbReference type="GO" id="GO:0031119">
    <property type="term" value="P:tRNA pseudouridine synthesis"/>
    <property type="evidence" value="ECO:0007669"/>
    <property type="project" value="UniProtKB-UniRule"/>
</dbReference>
<dbReference type="CDD" id="cd02573">
    <property type="entry name" value="PseudoU_synth_EcTruB"/>
    <property type="match status" value="1"/>
</dbReference>
<dbReference type="Gene3D" id="3.30.2350.10">
    <property type="entry name" value="Pseudouridine synthase"/>
    <property type="match status" value="1"/>
</dbReference>
<dbReference type="HAMAP" id="MF_01080">
    <property type="entry name" value="TruB_bact"/>
    <property type="match status" value="1"/>
</dbReference>
<dbReference type="InterPro" id="IPR020103">
    <property type="entry name" value="PsdUridine_synth_cat_dom_sf"/>
</dbReference>
<dbReference type="InterPro" id="IPR002501">
    <property type="entry name" value="PsdUridine_synth_N"/>
</dbReference>
<dbReference type="InterPro" id="IPR014780">
    <property type="entry name" value="tRNA_psdUridine_synth_TruB"/>
</dbReference>
<dbReference type="InterPro" id="IPR032819">
    <property type="entry name" value="TruB_C"/>
</dbReference>
<dbReference type="NCBIfam" id="TIGR00431">
    <property type="entry name" value="TruB"/>
    <property type="match status" value="1"/>
</dbReference>
<dbReference type="PANTHER" id="PTHR13767:SF2">
    <property type="entry name" value="PSEUDOURIDYLATE SYNTHASE TRUB1"/>
    <property type="match status" value="1"/>
</dbReference>
<dbReference type="PANTHER" id="PTHR13767">
    <property type="entry name" value="TRNA-PSEUDOURIDINE SYNTHASE"/>
    <property type="match status" value="1"/>
</dbReference>
<dbReference type="Pfam" id="PF16198">
    <property type="entry name" value="TruB_C_2"/>
    <property type="match status" value="1"/>
</dbReference>
<dbReference type="Pfam" id="PF01509">
    <property type="entry name" value="TruB_N"/>
    <property type="match status" value="1"/>
</dbReference>
<dbReference type="SUPFAM" id="SSF55120">
    <property type="entry name" value="Pseudouridine synthase"/>
    <property type="match status" value="1"/>
</dbReference>
<accession>Q5FHK7</accession>
<evidence type="ECO:0000255" key="1">
    <source>
        <dbReference type="HAMAP-Rule" id="MF_01080"/>
    </source>
</evidence>
<name>TRUB_EHRRG</name>
<sequence>MYGWINIDKPCGISSASVVSRVKKILNVKKVGYAGTLDPLASGILPIAIGEATKLMPYAVDVQKSYIFTVQWGEQRTTDDASGEIIKKSNIVPHFEEINKIIPNFIGMIEQVPPNFSAIHVDGVRAFKLARNGQEFELSSRYVNVVRLKLLSFSRENNTADFYLLCKKGVYVRSIARDLGIRLGCFGYVAKLRRVRVGYFKQKNAITLDKLKILHNNGDTHKYLLPLWYVLQDIKHLDDVFCSVEISKIKNGQNIQLNNLYMVKNCDMCYVSTHSVPVAICSIANNVIKPVRVFNV</sequence>
<gene>
    <name evidence="1" type="primary">truB</name>
    <name type="ordered locus">ERGA_CDS_03550</name>
</gene>
<feature type="chain" id="PRO_0000121833" description="tRNA pseudouridine synthase B">
    <location>
        <begin position="1"/>
        <end position="296"/>
    </location>
</feature>
<feature type="active site" description="Nucleophile" evidence="1">
    <location>
        <position position="38"/>
    </location>
</feature>